<accession>Q31GF2</accession>
<keyword id="KW-0131">Cell cycle</keyword>
<keyword id="KW-0132">Cell division</keyword>
<keyword id="KW-0143">Chaperone</keyword>
<keyword id="KW-0963">Cytoplasm</keyword>
<keyword id="KW-0413">Isomerase</keyword>
<keyword id="KW-0697">Rotamase</keyword>
<comment type="function">
    <text evidence="1">Involved in protein export. Acts as a chaperone by maintaining the newly synthesized protein in an open conformation. Functions as a peptidyl-prolyl cis-trans isomerase.</text>
</comment>
<comment type="catalytic activity">
    <reaction evidence="1">
        <text>[protein]-peptidylproline (omega=180) = [protein]-peptidylproline (omega=0)</text>
        <dbReference type="Rhea" id="RHEA:16237"/>
        <dbReference type="Rhea" id="RHEA-COMP:10747"/>
        <dbReference type="Rhea" id="RHEA-COMP:10748"/>
        <dbReference type="ChEBI" id="CHEBI:83833"/>
        <dbReference type="ChEBI" id="CHEBI:83834"/>
        <dbReference type="EC" id="5.2.1.8"/>
    </reaction>
</comment>
<comment type="subcellular location">
    <subcellularLocation>
        <location>Cytoplasm</location>
    </subcellularLocation>
    <text evidence="1">About half TF is bound to the ribosome near the polypeptide exit tunnel while the other half is free in the cytoplasm.</text>
</comment>
<comment type="domain">
    <text evidence="1">Consists of 3 domains; the N-terminus binds the ribosome, the middle domain has PPIase activity, while the C-terminus has intrinsic chaperone activity on its own.</text>
</comment>
<comment type="similarity">
    <text evidence="1">Belongs to the FKBP-type PPIase family. Tig subfamily.</text>
</comment>
<dbReference type="EC" id="5.2.1.8" evidence="1"/>
<dbReference type="EMBL" id="CP000109">
    <property type="protein sequence ID" value="ABB41771.1"/>
    <property type="molecule type" value="Genomic_DNA"/>
</dbReference>
<dbReference type="SMR" id="Q31GF2"/>
<dbReference type="STRING" id="317025.Tcr_1176"/>
<dbReference type="KEGG" id="tcx:Tcr_1176"/>
<dbReference type="eggNOG" id="COG0544">
    <property type="taxonomic scope" value="Bacteria"/>
</dbReference>
<dbReference type="HOGENOM" id="CLU_033058_2_0_6"/>
<dbReference type="OrthoDB" id="9767721at2"/>
<dbReference type="GO" id="GO:0005737">
    <property type="term" value="C:cytoplasm"/>
    <property type="evidence" value="ECO:0007669"/>
    <property type="project" value="UniProtKB-SubCell"/>
</dbReference>
<dbReference type="GO" id="GO:0003755">
    <property type="term" value="F:peptidyl-prolyl cis-trans isomerase activity"/>
    <property type="evidence" value="ECO:0007669"/>
    <property type="project" value="UniProtKB-UniRule"/>
</dbReference>
<dbReference type="GO" id="GO:0044183">
    <property type="term" value="F:protein folding chaperone"/>
    <property type="evidence" value="ECO:0007669"/>
    <property type="project" value="TreeGrafter"/>
</dbReference>
<dbReference type="GO" id="GO:0043022">
    <property type="term" value="F:ribosome binding"/>
    <property type="evidence" value="ECO:0007669"/>
    <property type="project" value="TreeGrafter"/>
</dbReference>
<dbReference type="GO" id="GO:0051083">
    <property type="term" value="P:'de novo' cotranslational protein folding"/>
    <property type="evidence" value="ECO:0007669"/>
    <property type="project" value="TreeGrafter"/>
</dbReference>
<dbReference type="GO" id="GO:0051301">
    <property type="term" value="P:cell division"/>
    <property type="evidence" value="ECO:0007669"/>
    <property type="project" value="UniProtKB-KW"/>
</dbReference>
<dbReference type="GO" id="GO:0061077">
    <property type="term" value="P:chaperone-mediated protein folding"/>
    <property type="evidence" value="ECO:0007669"/>
    <property type="project" value="TreeGrafter"/>
</dbReference>
<dbReference type="GO" id="GO:0015031">
    <property type="term" value="P:protein transport"/>
    <property type="evidence" value="ECO:0007669"/>
    <property type="project" value="UniProtKB-UniRule"/>
</dbReference>
<dbReference type="GO" id="GO:0043335">
    <property type="term" value="P:protein unfolding"/>
    <property type="evidence" value="ECO:0007669"/>
    <property type="project" value="TreeGrafter"/>
</dbReference>
<dbReference type="FunFam" id="3.10.50.40:FF:000001">
    <property type="entry name" value="Trigger factor"/>
    <property type="match status" value="1"/>
</dbReference>
<dbReference type="Gene3D" id="3.10.50.40">
    <property type="match status" value="1"/>
</dbReference>
<dbReference type="Gene3D" id="3.30.70.1050">
    <property type="entry name" value="Trigger factor ribosome-binding domain"/>
    <property type="match status" value="1"/>
</dbReference>
<dbReference type="Gene3D" id="1.10.3120.10">
    <property type="entry name" value="Trigger factor, C-terminal domain"/>
    <property type="match status" value="1"/>
</dbReference>
<dbReference type="HAMAP" id="MF_00303">
    <property type="entry name" value="Trigger_factor_Tig"/>
    <property type="match status" value="1"/>
</dbReference>
<dbReference type="InterPro" id="IPR046357">
    <property type="entry name" value="PPIase_dom_sf"/>
</dbReference>
<dbReference type="InterPro" id="IPR001179">
    <property type="entry name" value="PPIase_FKBP_dom"/>
</dbReference>
<dbReference type="InterPro" id="IPR005215">
    <property type="entry name" value="Trig_fac"/>
</dbReference>
<dbReference type="InterPro" id="IPR008880">
    <property type="entry name" value="Trigger_fac_C"/>
</dbReference>
<dbReference type="InterPro" id="IPR037041">
    <property type="entry name" value="Trigger_fac_C_sf"/>
</dbReference>
<dbReference type="InterPro" id="IPR008881">
    <property type="entry name" value="Trigger_fac_ribosome-bd_bac"/>
</dbReference>
<dbReference type="InterPro" id="IPR036611">
    <property type="entry name" value="Trigger_fac_ribosome-bd_sf"/>
</dbReference>
<dbReference type="InterPro" id="IPR027304">
    <property type="entry name" value="Trigger_fact/SurA_dom_sf"/>
</dbReference>
<dbReference type="NCBIfam" id="TIGR00115">
    <property type="entry name" value="tig"/>
    <property type="match status" value="1"/>
</dbReference>
<dbReference type="PANTHER" id="PTHR30560">
    <property type="entry name" value="TRIGGER FACTOR CHAPERONE AND PEPTIDYL-PROLYL CIS/TRANS ISOMERASE"/>
    <property type="match status" value="1"/>
</dbReference>
<dbReference type="PANTHER" id="PTHR30560:SF3">
    <property type="entry name" value="TRIGGER FACTOR-LIKE PROTEIN TIG, CHLOROPLASTIC"/>
    <property type="match status" value="1"/>
</dbReference>
<dbReference type="Pfam" id="PF00254">
    <property type="entry name" value="FKBP_C"/>
    <property type="match status" value="1"/>
</dbReference>
<dbReference type="Pfam" id="PF05698">
    <property type="entry name" value="Trigger_C"/>
    <property type="match status" value="1"/>
</dbReference>
<dbReference type="Pfam" id="PF05697">
    <property type="entry name" value="Trigger_N"/>
    <property type="match status" value="1"/>
</dbReference>
<dbReference type="PIRSF" id="PIRSF003095">
    <property type="entry name" value="Trigger_factor"/>
    <property type="match status" value="1"/>
</dbReference>
<dbReference type="SUPFAM" id="SSF54534">
    <property type="entry name" value="FKBP-like"/>
    <property type="match status" value="1"/>
</dbReference>
<dbReference type="SUPFAM" id="SSF109998">
    <property type="entry name" value="Triger factor/SurA peptide-binding domain-like"/>
    <property type="match status" value="1"/>
</dbReference>
<dbReference type="SUPFAM" id="SSF102735">
    <property type="entry name" value="Trigger factor ribosome-binding domain"/>
    <property type="match status" value="1"/>
</dbReference>
<dbReference type="PROSITE" id="PS50059">
    <property type="entry name" value="FKBP_PPIASE"/>
    <property type="match status" value="1"/>
</dbReference>
<feature type="chain" id="PRO_0000256640" description="Trigger factor">
    <location>
        <begin position="1"/>
        <end position="436"/>
    </location>
</feature>
<feature type="domain" description="PPIase FKBP-type" evidence="1">
    <location>
        <begin position="163"/>
        <end position="248"/>
    </location>
</feature>
<organism>
    <name type="scientific">Hydrogenovibrio crunogenus (strain DSM 25203 / XCL-2)</name>
    <name type="common">Thiomicrospira crunogena</name>
    <dbReference type="NCBI Taxonomy" id="317025"/>
    <lineage>
        <taxon>Bacteria</taxon>
        <taxon>Pseudomonadati</taxon>
        <taxon>Pseudomonadota</taxon>
        <taxon>Gammaproteobacteria</taxon>
        <taxon>Thiotrichales</taxon>
        <taxon>Piscirickettsiaceae</taxon>
        <taxon>Hydrogenovibrio</taxon>
    </lineage>
</organism>
<evidence type="ECO:0000255" key="1">
    <source>
        <dbReference type="HAMAP-Rule" id="MF_00303"/>
    </source>
</evidence>
<protein>
    <recommendedName>
        <fullName evidence="1">Trigger factor</fullName>
        <shortName evidence="1">TF</shortName>
        <ecNumber evidence="1">5.2.1.8</ecNumber>
    </recommendedName>
    <alternativeName>
        <fullName evidence="1">PPIase</fullName>
    </alternativeName>
</protein>
<sequence>MQVTVEKPETGLEHKINVTLPAGDLDSKVEQRLAQMRRTVKMDGFRPGKVPMSVVKKRYGGQVRQEMMGETVQQSFYDAVAKESLNIAGYPQFQELDEKDGHIVYSATFEVFPEVELPKFSSLKVETVTSEVTDKDVEKMVTRLREQKMAWKPANGNKKAKEGDQVIIDFVGKKDGEEFEGGKAEEVPLELGSGRMIPGFEDGIIGMKKNEEKTIEVTFPEDYQSDELKGQTVTFDITVHSVQTKVLPEIDEEFVKSFGIEEGTEEALVNEIRSNMEKELKRSVENKNRTAVLDALAEKVEVELPQAMVDQEASALMERQLEQFQQQGLKAEDIGLTAEAFKPEAEKRVKIGLVLGEVIKEYKIEATDEARQAFIQDQASSYEDPQEVIEWYAKNPQAQKEIDAILVEKEITNKILSEAKTKEVSKSFEEIVSPAA</sequence>
<proteinExistence type="inferred from homology"/>
<gene>
    <name evidence="1" type="primary">tig</name>
    <name type="ordered locus">Tcr_1176</name>
</gene>
<reference key="1">
    <citation type="journal article" date="2006" name="PLoS Biol.">
        <title>The genome of deep-sea vent chemolithoautotroph Thiomicrospira crunogena XCL-2.</title>
        <authorList>
            <person name="Scott K.M."/>
            <person name="Sievert S.M."/>
            <person name="Abril F.N."/>
            <person name="Ball L.A."/>
            <person name="Barrett C.J."/>
            <person name="Blake R.A."/>
            <person name="Boller A.J."/>
            <person name="Chain P.S.G."/>
            <person name="Clark J.A."/>
            <person name="Davis C.R."/>
            <person name="Detter C."/>
            <person name="Do K.F."/>
            <person name="Dobrinski K.P."/>
            <person name="Faza B.I."/>
            <person name="Fitzpatrick K.A."/>
            <person name="Freyermuth S.K."/>
            <person name="Harmer T.L."/>
            <person name="Hauser L.J."/>
            <person name="Huegler M."/>
            <person name="Kerfeld C.A."/>
            <person name="Klotz M.G."/>
            <person name="Kong W.W."/>
            <person name="Land M."/>
            <person name="Lapidus A."/>
            <person name="Larimer F.W."/>
            <person name="Longo D.L."/>
            <person name="Lucas S."/>
            <person name="Malfatti S.A."/>
            <person name="Massey S.E."/>
            <person name="Martin D.D."/>
            <person name="McCuddin Z."/>
            <person name="Meyer F."/>
            <person name="Moore J.L."/>
            <person name="Ocampo L.H. Jr."/>
            <person name="Paul J.H."/>
            <person name="Paulsen I.T."/>
            <person name="Reep D.K."/>
            <person name="Ren Q."/>
            <person name="Ross R.L."/>
            <person name="Sato P.Y."/>
            <person name="Thomas P."/>
            <person name="Tinkham L.E."/>
            <person name="Zeruth G.T."/>
        </authorList>
    </citation>
    <scope>NUCLEOTIDE SEQUENCE [LARGE SCALE GENOMIC DNA]</scope>
    <source>
        <strain>DSM 25203 / XCL-2</strain>
    </source>
</reference>
<name>TIG_HYDCU</name>